<proteinExistence type="evidence at protein level"/>
<accession>P63668</accession>
<accession>Q7BDA6</accession>
<accession>Q97PT7</accession>
<name>ATPE_STRR6</name>
<feature type="chain" id="PRO_0000188218" description="ATP synthase epsilon chain">
    <location>
        <begin position="1"/>
        <end position="139"/>
    </location>
</feature>
<keyword id="KW-0066">ATP synthesis</keyword>
<keyword id="KW-1003">Cell membrane</keyword>
<keyword id="KW-0139">CF(1)</keyword>
<keyword id="KW-0375">Hydrogen ion transport</keyword>
<keyword id="KW-0406">Ion transport</keyword>
<keyword id="KW-0472">Membrane</keyword>
<keyword id="KW-1185">Reference proteome</keyword>
<keyword id="KW-0813">Transport</keyword>
<dbReference type="EMBL" id="AF368465">
    <property type="protein sequence ID" value="AAL66417.1"/>
    <property type="molecule type" value="Genomic_DNA"/>
</dbReference>
<dbReference type="EMBL" id="AE007317">
    <property type="protein sequence ID" value="AAL00163.1"/>
    <property type="molecule type" value="Genomic_DNA"/>
</dbReference>
<dbReference type="PIR" id="F98041">
    <property type="entry name" value="F98041"/>
</dbReference>
<dbReference type="RefSeq" id="NP_358952.1">
    <property type="nucleotide sequence ID" value="NC_003098.1"/>
</dbReference>
<dbReference type="RefSeq" id="WP_000068050.1">
    <property type="nucleotide sequence ID" value="NC_003098.1"/>
</dbReference>
<dbReference type="SMR" id="P63668"/>
<dbReference type="STRING" id="171101.spr1359"/>
<dbReference type="KEGG" id="spr:spr1359"/>
<dbReference type="PATRIC" id="fig|171101.6.peg.1473"/>
<dbReference type="eggNOG" id="COG0355">
    <property type="taxonomic scope" value="Bacteria"/>
</dbReference>
<dbReference type="HOGENOM" id="CLU_084338_1_0_9"/>
<dbReference type="Proteomes" id="UP000000586">
    <property type="component" value="Chromosome"/>
</dbReference>
<dbReference type="GO" id="GO:0005886">
    <property type="term" value="C:plasma membrane"/>
    <property type="evidence" value="ECO:0007669"/>
    <property type="project" value="UniProtKB-SubCell"/>
</dbReference>
<dbReference type="GO" id="GO:0045259">
    <property type="term" value="C:proton-transporting ATP synthase complex"/>
    <property type="evidence" value="ECO:0007669"/>
    <property type="project" value="UniProtKB-KW"/>
</dbReference>
<dbReference type="GO" id="GO:0005524">
    <property type="term" value="F:ATP binding"/>
    <property type="evidence" value="ECO:0007669"/>
    <property type="project" value="UniProtKB-UniRule"/>
</dbReference>
<dbReference type="GO" id="GO:0046933">
    <property type="term" value="F:proton-transporting ATP synthase activity, rotational mechanism"/>
    <property type="evidence" value="ECO:0007669"/>
    <property type="project" value="UniProtKB-UniRule"/>
</dbReference>
<dbReference type="GO" id="GO:0015986">
    <property type="term" value="P:proton motive force-driven ATP synthesis"/>
    <property type="evidence" value="ECO:0000318"/>
    <property type="project" value="GO_Central"/>
</dbReference>
<dbReference type="CDD" id="cd12152">
    <property type="entry name" value="F1-ATPase_delta"/>
    <property type="match status" value="1"/>
</dbReference>
<dbReference type="FunFam" id="1.20.5.440:FF:000001">
    <property type="entry name" value="ATP synthase epsilon chain"/>
    <property type="match status" value="1"/>
</dbReference>
<dbReference type="Gene3D" id="1.20.5.440">
    <property type="entry name" value="ATP synthase delta/epsilon subunit, C-terminal domain"/>
    <property type="match status" value="1"/>
</dbReference>
<dbReference type="Gene3D" id="2.60.15.10">
    <property type="entry name" value="F0F1 ATP synthase delta/epsilon subunit, N-terminal"/>
    <property type="match status" value="1"/>
</dbReference>
<dbReference type="HAMAP" id="MF_00530">
    <property type="entry name" value="ATP_synth_epsil_bac"/>
    <property type="match status" value="1"/>
</dbReference>
<dbReference type="InterPro" id="IPR001469">
    <property type="entry name" value="ATP_synth_F1_dsu/esu"/>
</dbReference>
<dbReference type="InterPro" id="IPR020546">
    <property type="entry name" value="ATP_synth_F1_dsu/esu_N"/>
</dbReference>
<dbReference type="InterPro" id="IPR020547">
    <property type="entry name" value="ATP_synth_F1_esu_C"/>
</dbReference>
<dbReference type="InterPro" id="IPR036771">
    <property type="entry name" value="ATPsynth_dsu/esu_N"/>
</dbReference>
<dbReference type="NCBIfam" id="TIGR01216">
    <property type="entry name" value="ATP_synt_epsi"/>
    <property type="match status" value="1"/>
</dbReference>
<dbReference type="NCBIfam" id="NF001846">
    <property type="entry name" value="PRK00571.1-3"/>
    <property type="match status" value="1"/>
</dbReference>
<dbReference type="PANTHER" id="PTHR13822">
    <property type="entry name" value="ATP SYNTHASE DELTA/EPSILON CHAIN"/>
    <property type="match status" value="1"/>
</dbReference>
<dbReference type="PANTHER" id="PTHR13822:SF10">
    <property type="entry name" value="ATP SYNTHASE EPSILON CHAIN, CHLOROPLASTIC"/>
    <property type="match status" value="1"/>
</dbReference>
<dbReference type="Pfam" id="PF00401">
    <property type="entry name" value="ATP-synt_DE"/>
    <property type="match status" value="1"/>
</dbReference>
<dbReference type="Pfam" id="PF02823">
    <property type="entry name" value="ATP-synt_DE_N"/>
    <property type="match status" value="1"/>
</dbReference>
<dbReference type="SUPFAM" id="SSF51344">
    <property type="entry name" value="Epsilon subunit of F1F0-ATP synthase N-terminal domain"/>
    <property type="match status" value="1"/>
</dbReference>
<evidence type="ECO:0000255" key="1">
    <source>
        <dbReference type="HAMAP-Rule" id="MF_00530"/>
    </source>
</evidence>
<evidence type="ECO:0000269" key="2">
    <source>
    </source>
</evidence>
<evidence type="ECO:0000305" key="3">
    <source>
    </source>
</evidence>
<gene>
    <name evidence="1" type="primary">atpC</name>
    <name type="ordered locus">spr1359</name>
</gene>
<protein>
    <recommendedName>
        <fullName evidence="1">ATP synthase epsilon chain</fullName>
    </recommendedName>
    <alternativeName>
        <fullName evidence="1">ATP synthase F1 sector epsilon subunit</fullName>
    </alternativeName>
    <alternativeName>
        <fullName evidence="1">F-ATPase epsilon subunit</fullName>
    </alternativeName>
</protein>
<sequence>MAQLTVQIVTPDGLVYDHHASYVSVRTLDGEMGILPRHENMIAVLAVDEVKVKRIDDKDHVNWIAVNGGVIEIANDMITIVADSAERARDIDISRAERAKLRAERAIEEAQDKHLIDQERRAKIALQRAINRINVGNRL</sequence>
<comment type="function">
    <text>Produces ATP from ADP in the presence of a proton gradient across the membrane.</text>
</comment>
<comment type="subunit">
    <text evidence="1 2">F-type ATPases have 2 components, CF(1) - the catalytic core - and CF(0) - the membrane proton channel. CF(1) has five subunits: alpha(3), beta(3), gamma(1), delta(1), epsilon(1). CF(0) has three main subunits: a, b and c.</text>
</comment>
<comment type="subcellular location">
    <subcellularLocation>
        <location evidence="3">Cell membrane</location>
        <topology evidence="3">Peripheral membrane protein</topology>
    </subcellularLocation>
</comment>
<comment type="induction">
    <text evidence="2">Induced by a decrease in external pH from 7.5 to 5.7.</text>
</comment>
<comment type="similarity">
    <text evidence="1">Belongs to the ATPase epsilon chain family.</text>
</comment>
<reference key="1">
    <citation type="journal article" date="2001" name="Mol. Microbiol.">
        <title>The promoter of the operon encoding the F0F1 ATPase of Streptococcus pneumoniae is inducible by pH.</title>
        <authorList>
            <person name="Martin-Galiano A.J."/>
            <person name="Ferrandiz M.J."/>
            <person name="de la Campa A.G."/>
        </authorList>
    </citation>
    <scope>NUCLEOTIDE SEQUENCE [GENOMIC DNA]</scope>
    <scope>SUBUNIT</scope>
    <scope>SUBCELLULAR LOCATION</scope>
    <scope>INDUCTION</scope>
</reference>
<reference key="2">
    <citation type="journal article" date="2001" name="J. Bacteriol.">
        <title>Genome of the bacterium Streptococcus pneumoniae strain R6.</title>
        <authorList>
            <person name="Hoskins J."/>
            <person name="Alborn W.E. Jr."/>
            <person name="Arnold J."/>
            <person name="Blaszczak L.C."/>
            <person name="Burgett S."/>
            <person name="DeHoff B.S."/>
            <person name="Estrem S.T."/>
            <person name="Fritz L."/>
            <person name="Fu D.-J."/>
            <person name="Fuller W."/>
            <person name="Geringer C."/>
            <person name="Gilmour R."/>
            <person name="Glass J.S."/>
            <person name="Khoja H."/>
            <person name="Kraft A.R."/>
            <person name="Lagace R.E."/>
            <person name="LeBlanc D.J."/>
            <person name="Lee L.N."/>
            <person name="Lefkowitz E.J."/>
            <person name="Lu J."/>
            <person name="Matsushima P."/>
            <person name="McAhren S.M."/>
            <person name="McHenney M."/>
            <person name="McLeaster K."/>
            <person name="Mundy C.W."/>
            <person name="Nicas T.I."/>
            <person name="Norris F.H."/>
            <person name="O'Gara M."/>
            <person name="Peery R.B."/>
            <person name="Robertson G.T."/>
            <person name="Rockey P."/>
            <person name="Sun P.-M."/>
            <person name="Winkler M.E."/>
            <person name="Yang Y."/>
            <person name="Young-Bellido M."/>
            <person name="Zhao G."/>
            <person name="Zook C.A."/>
            <person name="Baltz R.H."/>
            <person name="Jaskunas S.R."/>
            <person name="Rosteck P.R. Jr."/>
            <person name="Skatrud P.L."/>
            <person name="Glass J.I."/>
        </authorList>
    </citation>
    <scope>NUCLEOTIDE SEQUENCE [LARGE SCALE GENOMIC DNA]</scope>
    <source>
        <strain>ATCC BAA-255 / R6</strain>
    </source>
</reference>
<organism>
    <name type="scientific">Streptococcus pneumoniae (strain ATCC BAA-255 / R6)</name>
    <dbReference type="NCBI Taxonomy" id="171101"/>
    <lineage>
        <taxon>Bacteria</taxon>
        <taxon>Bacillati</taxon>
        <taxon>Bacillota</taxon>
        <taxon>Bacilli</taxon>
        <taxon>Lactobacillales</taxon>
        <taxon>Streptococcaceae</taxon>
        <taxon>Streptococcus</taxon>
    </lineage>
</organism>